<name>TDCC_SALDC</name>
<dbReference type="EMBL" id="CP001144">
    <property type="protein sequence ID" value="ACH73832.1"/>
    <property type="molecule type" value="Genomic_DNA"/>
</dbReference>
<dbReference type="RefSeq" id="WP_000108129.1">
    <property type="nucleotide sequence ID" value="NC_011205.1"/>
</dbReference>
<dbReference type="KEGG" id="sed:SeD_A3601"/>
<dbReference type="HOGENOM" id="CLU_052043_1_1_6"/>
<dbReference type="Proteomes" id="UP000008322">
    <property type="component" value="Chromosome"/>
</dbReference>
<dbReference type="GO" id="GO:0005886">
    <property type="term" value="C:plasma membrane"/>
    <property type="evidence" value="ECO:0007669"/>
    <property type="project" value="UniProtKB-SubCell"/>
</dbReference>
<dbReference type="GO" id="GO:0015194">
    <property type="term" value="F:L-serine transmembrane transporter activity"/>
    <property type="evidence" value="ECO:0007669"/>
    <property type="project" value="InterPro"/>
</dbReference>
<dbReference type="GO" id="GO:0015293">
    <property type="term" value="F:symporter activity"/>
    <property type="evidence" value="ECO:0007669"/>
    <property type="project" value="UniProtKB-UniRule"/>
</dbReference>
<dbReference type="GO" id="GO:0015565">
    <property type="term" value="F:threonine efflux transmembrane transporter activity"/>
    <property type="evidence" value="ECO:0007669"/>
    <property type="project" value="InterPro"/>
</dbReference>
<dbReference type="Gene3D" id="1.20.1740.10">
    <property type="entry name" value="Amino acid/polyamine transporter I"/>
    <property type="match status" value="1"/>
</dbReference>
<dbReference type="HAMAP" id="MF_01583">
    <property type="entry name" value="Thr_Ser_transp_TdcC"/>
    <property type="match status" value="1"/>
</dbReference>
<dbReference type="InterPro" id="IPR018227">
    <property type="entry name" value="Amino_acid_transport_2"/>
</dbReference>
<dbReference type="InterPro" id="IPR004694">
    <property type="entry name" value="Hydroxy_aa_transpt"/>
</dbReference>
<dbReference type="InterPro" id="IPR023726">
    <property type="entry name" value="Thr/Ser_transpt_TdcC"/>
</dbReference>
<dbReference type="NCBIfam" id="NF010152">
    <property type="entry name" value="PRK13629.1"/>
    <property type="match status" value="1"/>
</dbReference>
<dbReference type="NCBIfam" id="TIGR00814">
    <property type="entry name" value="stp"/>
    <property type="match status" value="1"/>
</dbReference>
<dbReference type="PANTHER" id="PTHR35334">
    <property type="entry name" value="SERINE TRANSPORTER"/>
    <property type="match status" value="1"/>
</dbReference>
<dbReference type="PANTHER" id="PTHR35334:SF1">
    <property type="entry name" value="THREONINE_SERINE TRANSPORTER TDCC"/>
    <property type="match status" value="1"/>
</dbReference>
<dbReference type="Pfam" id="PF03222">
    <property type="entry name" value="Trp_Tyr_perm"/>
    <property type="match status" value="1"/>
</dbReference>
<sequence length="443" mass="48974">MSTTDSIVSSQAKQSSWRKSDTTWTLGLFGTAIGAGVLFFPIRAGFGGLIPILLMLVLAYPIAFYCHRALARLCLSGSNPSGNITETVEEHFGKTGGVVITFLYFFAICPLLWIYGVTITNTFMTFWENQLQMPALNRGFVALFLLLLMAFVIWFGKDLMVKVMSYLVWPFIASLVLISLSLIPYWNSAVIDQVDLSNIALTGHDGILVTVWLGISIMVFSFNFSPIVSSFVVSKREEYEKEFGREFTERKCSQIISRASMLMVAVVMFFAFSCLFTLSPQNMADAKAQNIPVLSYLANHFASLSGTKSTFATVLEYGASIIALVAIFKSFFGHYLGTLEGLNGLVLKFGYKGDKTKVSMGKLNTISMIFIMGSTWVVAYANPNILDLIEAMGAPIIASLLCLLPMYAIRKAPSLAKYRGRLDNVFVTLIGLLTILNIVYKLF</sequence>
<gene>
    <name evidence="1" type="primary">tdcC</name>
    <name type="ordered locus">SeD_A3601</name>
</gene>
<organism>
    <name type="scientific">Salmonella dublin (strain CT_02021853)</name>
    <dbReference type="NCBI Taxonomy" id="439851"/>
    <lineage>
        <taxon>Bacteria</taxon>
        <taxon>Pseudomonadati</taxon>
        <taxon>Pseudomonadota</taxon>
        <taxon>Gammaproteobacteria</taxon>
        <taxon>Enterobacterales</taxon>
        <taxon>Enterobacteriaceae</taxon>
        <taxon>Salmonella</taxon>
    </lineage>
</organism>
<keyword id="KW-0029">Amino-acid transport</keyword>
<keyword id="KW-0997">Cell inner membrane</keyword>
<keyword id="KW-1003">Cell membrane</keyword>
<keyword id="KW-0472">Membrane</keyword>
<keyword id="KW-0769">Symport</keyword>
<keyword id="KW-0812">Transmembrane</keyword>
<keyword id="KW-1133">Transmembrane helix</keyword>
<keyword id="KW-0813">Transport</keyword>
<accession>B5FHX7</accession>
<proteinExistence type="inferred from homology"/>
<evidence type="ECO:0000255" key="1">
    <source>
        <dbReference type="HAMAP-Rule" id="MF_01583"/>
    </source>
</evidence>
<feature type="chain" id="PRO_1000147636" description="Threonine/serine transporter TdcC">
    <location>
        <begin position="1"/>
        <end position="443"/>
    </location>
</feature>
<feature type="transmembrane region" description="Helical" evidence="1">
    <location>
        <begin position="22"/>
        <end position="42"/>
    </location>
</feature>
<feature type="transmembrane region" description="Helical" evidence="1">
    <location>
        <begin position="44"/>
        <end position="64"/>
    </location>
</feature>
<feature type="transmembrane region" description="Helical" evidence="1">
    <location>
        <begin position="97"/>
        <end position="117"/>
    </location>
</feature>
<feature type="transmembrane region" description="Helical" evidence="1">
    <location>
        <begin position="140"/>
        <end position="160"/>
    </location>
</feature>
<feature type="transmembrane region" description="Helical" evidence="1">
    <location>
        <begin position="163"/>
        <end position="183"/>
    </location>
</feature>
<feature type="transmembrane region" description="Helical" evidence="1">
    <location>
        <begin position="207"/>
        <end position="227"/>
    </location>
</feature>
<feature type="transmembrane region" description="Helical" evidence="1">
    <location>
        <begin position="259"/>
        <end position="279"/>
    </location>
</feature>
<feature type="transmembrane region" description="Helical" evidence="1">
    <location>
        <begin position="319"/>
        <end position="339"/>
    </location>
</feature>
<feature type="transmembrane region" description="Helical" evidence="1">
    <location>
        <begin position="366"/>
        <end position="386"/>
    </location>
</feature>
<feature type="transmembrane region" description="Helical" evidence="1">
    <location>
        <begin position="389"/>
        <end position="409"/>
    </location>
</feature>
<feature type="transmembrane region" description="Helical" evidence="1">
    <location>
        <begin position="423"/>
        <end position="443"/>
    </location>
</feature>
<reference key="1">
    <citation type="journal article" date="2011" name="J. Bacteriol.">
        <title>Comparative genomics of 28 Salmonella enterica isolates: evidence for CRISPR-mediated adaptive sublineage evolution.</title>
        <authorList>
            <person name="Fricke W.F."/>
            <person name="Mammel M.K."/>
            <person name="McDermott P.F."/>
            <person name="Tartera C."/>
            <person name="White D.G."/>
            <person name="Leclerc J.E."/>
            <person name="Ravel J."/>
            <person name="Cebula T.A."/>
        </authorList>
    </citation>
    <scope>NUCLEOTIDE SEQUENCE [LARGE SCALE GENOMIC DNA]</scope>
    <source>
        <strain>CT_02021853</strain>
    </source>
</reference>
<comment type="function">
    <text evidence="1">Involved in the import of threonine and serine into the cell, with the concomitant import of a proton (symport system).</text>
</comment>
<comment type="catalytic activity">
    <reaction evidence="1">
        <text>L-threonine(in) + H(+)(in) = L-threonine(out) + H(+)(out)</text>
        <dbReference type="Rhea" id="RHEA:28883"/>
        <dbReference type="ChEBI" id="CHEBI:15378"/>
        <dbReference type="ChEBI" id="CHEBI:57926"/>
    </reaction>
    <physiologicalReaction direction="right-to-left" evidence="1">
        <dbReference type="Rhea" id="RHEA:28885"/>
    </physiologicalReaction>
</comment>
<comment type="catalytic activity">
    <reaction evidence="1">
        <text>L-serine(in) + H(+)(in) = L-serine(out) + H(+)(out)</text>
        <dbReference type="Rhea" id="RHEA:28887"/>
        <dbReference type="ChEBI" id="CHEBI:15378"/>
        <dbReference type="ChEBI" id="CHEBI:33384"/>
    </reaction>
    <physiologicalReaction direction="right-to-left" evidence="1">
        <dbReference type="Rhea" id="RHEA:28889"/>
    </physiologicalReaction>
</comment>
<comment type="subcellular location">
    <subcellularLocation>
        <location evidence="1">Cell inner membrane</location>
        <topology evidence="1">Multi-pass membrane protein</topology>
    </subcellularLocation>
</comment>
<comment type="similarity">
    <text evidence="1">Belongs to the amino acid/polyamine transporter 2 family. SdaC/TdcC subfamily.</text>
</comment>
<protein>
    <recommendedName>
        <fullName evidence="1">Threonine/serine transporter TdcC</fullName>
    </recommendedName>
    <alternativeName>
        <fullName evidence="1">H(+)/threonine-serine symporter</fullName>
    </alternativeName>
</protein>